<gene>
    <name type="primary">mcts1</name>
    <name type="ORF">TEgg094c21.2</name>
</gene>
<keyword id="KW-0131">Cell cycle</keyword>
<keyword id="KW-0963">Cytoplasm</keyword>
<keyword id="KW-0341">Growth regulation</keyword>
<keyword id="KW-1185">Reference proteome</keyword>
<keyword id="KW-0804">Transcription</keyword>
<keyword id="KW-0805">Transcription regulation</keyword>
<name>MCTS1_XENTR</name>
<organism>
    <name type="scientific">Xenopus tropicalis</name>
    <name type="common">Western clawed frog</name>
    <name type="synonym">Silurana tropicalis</name>
    <dbReference type="NCBI Taxonomy" id="8364"/>
    <lineage>
        <taxon>Eukaryota</taxon>
        <taxon>Metazoa</taxon>
        <taxon>Chordata</taxon>
        <taxon>Craniata</taxon>
        <taxon>Vertebrata</taxon>
        <taxon>Euteleostomi</taxon>
        <taxon>Amphibia</taxon>
        <taxon>Batrachia</taxon>
        <taxon>Anura</taxon>
        <taxon>Pipoidea</taxon>
        <taxon>Pipidae</taxon>
        <taxon>Xenopodinae</taxon>
        <taxon>Xenopus</taxon>
        <taxon>Silurana</taxon>
    </lineage>
</organism>
<proteinExistence type="evidence at transcript level"/>
<comment type="function">
    <text evidence="1">Plays a role as translation enhancer and involved in cell cycle regulation.</text>
</comment>
<comment type="subcellular location">
    <subcellularLocation>
        <location evidence="1">Cytoplasm</location>
    </subcellularLocation>
</comment>
<comment type="domain">
    <text evidence="1">The PUA RNA-binding domain is critical for cap binding, but not sufficient for translation enhancer function.</text>
</comment>
<comment type="similarity">
    <text evidence="3">Belongs to the MCTS1 family.</text>
</comment>
<evidence type="ECO:0000250" key="1"/>
<evidence type="ECO:0000255" key="2">
    <source>
        <dbReference type="PROSITE-ProRule" id="PRU00161"/>
    </source>
</evidence>
<evidence type="ECO:0000305" key="3"/>
<protein>
    <recommendedName>
        <fullName>Malignant T-cell-amplified sequence 1</fullName>
        <shortName>MCT-1</shortName>
    </recommendedName>
</protein>
<reference key="1">
    <citation type="submission" date="2006-10" db="EMBL/GenBank/DDBJ databases">
        <authorList>
            <consortium name="Sanger Xenopus tropicalis EST/cDNA project"/>
        </authorList>
    </citation>
    <scope>NUCLEOTIDE SEQUENCE [LARGE SCALE MRNA]</scope>
    <source>
        <tissue>Egg</tissue>
    </source>
</reference>
<reference key="2">
    <citation type="submission" date="2004-07" db="EMBL/GenBank/DDBJ databases">
        <authorList>
            <consortium name="NIH - Xenopus Gene Collection (XGC) project"/>
        </authorList>
    </citation>
    <scope>NUCLEOTIDE SEQUENCE [LARGE SCALE MRNA]</scope>
    <source>
        <tissue>Embryo</tissue>
    </source>
</reference>
<feature type="chain" id="PRO_0000344794" description="Malignant T-cell-amplified sequence 1">
    <location>
        <begin position="1"/>
        <end position="181"/>
    </location>
</feature>
<feature type="domain" description="PUA" evidence="2">
    <location>
        <begin position="92"/>
        <end position="171"/>
    </location>
</feature>
<accession>Q6DER1</accession>
<sequence>MFKKFDEKENVSNCIQLKTSVIKGIKNQLIDQFPVIEQWLNQIMPKKDPVKIVRCHEHIEILTVNGELLFFRQREGPFYPTLRLLHKYPFILPHQQVDKGAIKFVLSGANIMCPGLTSPGAKLYPAAADTVVAIMAEGKQHALCVGVMKMSADDIEKVNKGIGIENIHYLNDGLWHMKTYK</sequence>
<dbReference type="EMBL" id="CR761407">
    <property type="protein sequence ID" value="CAJ82207.1"/>
    <property type="molecule type" value="mRNA"/>
</dbReference>
<dbReference type="EMBL" id="BC077034">
    <property type="protein sequence ID" value="AAH77034.1"/>
    <property type="molecule type" value="mRNA"/>
</dbReference>
<dbReference type="RefSeq" id="NP_001006880.1">
    <property type="nucleotide sequence ID" value="NM_001006879.1"/>
</dbReference>
<dbReference type="SMR" id="Q6DER1"/>
<dbReference type="FunCoup" id="Q6DER1">
    <property type="interactions" value="1421"/>
</dbReference>
<dbReference type="STRING" id="8364.ENSXETP00000039466"/>
<dbReference type="PaxDb" id="8364-ENSXETP00000009702"/>
<dbReference type="DNASU" id="448679"/>
<dbReference type="GeneID" id="448679"/>
<dbReference type="KEGG" id="xtr:448679"/>
<dbReference type="AGR" id="Xenbase:XB-GENE-998581"/>
<dbReference type="CTD" id="28985"/>
<dbReference type="Xenbase" id="XB-GENE-998581">
    <property type="gene designation" value="mcts1"/>
</dbReference>
<dbReference type="eggNOG" id="KOG2523">
    <property type="taxonomic scope" value="Eukaryota"/>
</dbReference>
<dbReference type="HOGENOM" id="CLU_090468_0_1_1"/>
<dbReference type="InParanoid" id="Q6DER1"/>
<dbReference type="OMA" id="GVENIHY"/>
<dbReference type="OrthoDB" id="10249667at2759"/>
<dbReference type="PhylomeDB" id="Q6DER1"/>
<dbReference type="TreeFam" id="TF315123"/>
<dbReference type="Proteomes" id="UP000008143">
    <property type="component" value="Chromosome 8"/>
</dbReference>
<dbReference type="Bgee" id="ENSXETG00000004472">
    <property type="expression patterns" value="Expressed in egg cell and 15 other cell types or tissues"/>
</dbReference>
<dbReference type="GO" id="GO:0005737">
    <property type="term" value="C:cytoplasm"/>
    <property type="evidence" value="ECO:0007669"/>
    <property type="project" value="UniProtKB-SubCell"/>
</dbReference>
<dbReference type="GO" id="GO:0003723">
    <property type="term" value="F:RNA binding"/>
    <property type="evidence" value="ECO:0007669"/>
    <property type="project" value="InterPro"/>
</dbReference>
<dbReference type="CDD" id="cd11609">
    <property type="entry name" value="MCT1_N"/>
    <property type="match status" value="1"/>
</dbReference>
<dbReference type="CDD" id="cd21155">
    <property type="entry name" value="PUA_MCTS-1-like"/>
    <property type="match status" value="1"/>
</dbReference>
<dbReference type="FunFam" id="3.10.400.20:FF:000001">
    <property type="entry name" value="Malignant T-cell-amplified sequence 1"/>
    <property type="match status" value="1"/>
</dbReference>
<dbReference type="Gene3D" id="3.10.400.20">
    <property type="match status" value="1"/>
</dbReference>
<dbReference type="InterPro" id="IPR016437">
    <property type="entry name" value="MCT-1/Tma20"/>
</dbReference>
<dbReference type="InterPro" id="IPR041366">
    <property type="entry name" value="Pre-PUA"/>
</dbReference>
<dbReference type="InterPro" id="IPR002478">
    <property type="entry name" value="PUA"/>
</dbReference>
<dbReference type="InterPro" id="IPR015947">
    <property type="entry name" value="PUA-like_sf"/>
</dbReference>
<dbReference type="InterPro" id="IPR004521">
    <property type="entry name" value="Uncharacterised_CHP00451"/>
</dbReference>
<dbReference type="NCBIfam" id="TIGR00451">
    <property type="entry name" value="unchar_dom_2"/>
    <property type="match status" value="1"/>
</dbReference>
<dbReference type="PANTHER" id="PTHR22798:SF0">
    <property type="entry name" value="MALIGNANT T-CELL-AMPLIFIED SEQUENCE 1"/>
    <property type="match status" value="1"/>
</dbReference>
<dbReference type="PANTHER" id="PTHR22798">
    <property type="entry name" value="MCT-1 PROTEIN"/>
    <property type="match status" value="1"/>
</dbReference>
<dbReference type="Pfam" id="PF17832">
    <property type="entry name" value="Pre-PUA"/>
    <property type="match status" value="1"/>
</dbReference>
<dbReference type="Pfam" id="PF01472">
    <property type="entry name" value="PUA"/>
    <property type="match status" value="1"/>
</dbReference>
<dbReference type="PIRSF" id="PIRSF005067">
    <property type="entry name" value="Tma_RNA-bind_prd"/>
    <property type="match status" value="1"/>
</dbReference>
<dbReference type="SMART" id="SM00359">
    <property type="entry name" value="PUA"/>
    <property type="match status" value="1"/>
</dbReference>
<dbReference type="SUPFAM" id="SSF88697">
    <property type="entry name" value="PUA domain-like"/>
    <property type="match status" value="1"/>
</dbReference>
<dbReference type="PROSITE" id="PS50890">
    <property type="entry name" value="PUA"/>
    <property type="match status" value="1"/>
</dbReference>